<protein>
    <recommendedName>
        <fullName>Ubiquitin-NEDD8-like protein RUB1</fullName>
    </recommendedName>
    <component>
        <recommendedName>
            <fullName>Ubiquitin</fullName>
        </recommendedName>
    </component>
    <component>
        <recommendedName>
            <fullName>NEDD8-like protein RUB1</fullName>
        </recommendedName>
        <alternativeName>
            <fullName>Ubiquitin-related protein 1</fullName>
            <shortName>AtRUB1</shortName>
        </alternativeName>
    </component>
</protein>
<feature type="chain" id="PRO_0000396910" description="Ubiquitin">
    <location>
        <begin position="1"/>
        <end position="76"/>
    </location>
</feature>
<feature type="chain" id="PRO_0000035965" description="NEDD8-like protein RUB1">
    <location>
        <begin position="77"/>
        <end position="152"/>
    </location>
</feature>
<feature type="propeptide" id="PRO_0000035966" evidence="7">
    <location>
        <begin position="153"/>
        <end position="156"/>
    </location>
</feature>
<feature type="domain" description="Ubiquitin-like 1" evidence="2">
    <location>
        <begin position="1"/>
        <end position="76"/>
    </location>
</feature>
<feature type="domain" description="Ubiquitin-like 2" evidence="2">
    <location>
        <begin position="77"/>
        <end position="152"/>
    </location>
</feature>
<feature type="cross-link" description="Glycyl lysine isopeptide (Gly-Lys) (interchain with K-? in acceptor proteins)" evidence="2">
    <location>
        <position position="76"/>
    </location>
</feature>
<feature type="cross-link" description="Glycyl lysine isopeptide (Gly-Lys) (interchain with K-? in acceptor proteins)" evidence="2">
    <location>
        <position position="152"/>
    </location>
</feature>
<feature type="strand" evidence="8">
    <location>
        <begin position="78"/>
        <end position="82"/>
    </location>
</feature>
<feature type="strand" evidence="8">
    <location>
        <begin position="88"/>
        <end position="92"/>
    </location>
</feature>
<feature type="helix" evidence="8">
    <location>
        <begin position="99"/>
        <end position="110"/>
    </location>
</feature>
<feature type="helix" evidence="8">
    <location>
        <begin position="114"/>
        <end position="116"/>
    </location>
</feature>
<feature type="strand" evidence="8">
    <location>
        <begin position="117"/>
        <end position="121"/>
    </location>
</feature>
<feature type="helix" evidence="8">
    <location>
        <begin position="133"/>
        <end position="135"/>
    </location>
</feature>
<feature type="strand" evidence="8">
    <location>
        <begin position="142"/>
        <end position="147"/>
    </location>
</feature>
<proteinExistence type="evidence at protein level"/>
<sequence length="156" mass="17397">MQIFVKTLTGKTITLEVESSDTIDNVKAKIQDKEGIPPDQQRLIFAGKQLEDGRTLADYNIQKESTLHLVLRLRGGTMIKVKTLTGKEIEIDIEPTDTIDRIKERVEEKEGIPPVQQRLIYAGKQLADDKTAKDYNIEGGSVLHLVLALRGGFGLL</sequence>
<keyword id="KW-0002">3D-structure</keyword>
<keyword id="KW-0963">Cytoplasm</keyword>
<keyword id="KW-1017">Isopeptide bond</keyword>
<keyword id="KW-0539">Nucleus</keyword>
<keyword id="KW-1185">Reference proteome</keyword>
<keyword id="KW-0677">Repeat</keyword>
<keyword id="KW-0833">Ubl conjugation pathway</keyword>
<gene>
    <name type="primary">RUB1</name>
    <name type="synonym">NEDD8</name>
    <name type="synonym">UBQ15</name>
    <name type="ordered locus">At1g31340</name>
    <name type="ORF">T19E23.13</name>
</gene>
<reference key="1">
    <citation type="journal article" date="2000" name="Nature">
        <title>Sequence and analysis of chromosome 1 of the plant Arabidopsis thaliana.</title>
        <authorList>
            <person name="Theologis A."/>
            <person name="Ecker J.R."/>
            <person name="Palm C.J."/>
            <person name="Federspiel N.A."/>
            <person name="Kaul S."/>
            <person name="White O."/>
            <person name="Alonso J."/>
            <person name="Altafi H."/>
            <person name="Araujo R."/>
            <person name="Bowman C.L."/>
            <person name="Brooks S.Y."/>
            <person name="Buehler E."/>
            <person name="Chan A."/>
            <person name="Chao Q."/>
            <person name="Chen H."/>
            <person name="Cheuk R.F."/>
            <person name="Chin C.W."/>
            <person name="Chung M.K."/>
            <person name="Conn L."/>
            <person name="Conway A.B."/>
            <person name="Conway A.R."/>
            <person name="Creasy T.H."/>
            <person name="Dewar K."/>
            <person name="Dunn P."/>
            <person name="Etgu P."/>
            <person name="Feldblyum T.V."/>
            <person name="Feng J.-D."/>
            <person name="Fong B."/>
            <person name="Fujii C.Y."/>
            <person name="Gill J.E."/>
            <person name="Goldsmith A.D."/>
            <person name="Haas B."/>
            <person name="Hansen N.F."/>
            <person name="Hughes B."/>
            <person name="Huizar L."/>
            <person name="Hunter J.L."/>
            <person name="Jenkins J."/>
            <person name="Johnson-Hopson C."/>
            <person name="Khan S."/>
            <person name="Khaykin E."/>
            <person name="Kim C.J."/>
            <person name="Koo H.L."/>
            <person name="Kremenetskaia I."/>
            <person name="Kurtz D.B."/>
            <person name="Kwan A."/>
            <person name="Lam B."/>
            <person name="Langin-Hooper S."/>
            <person name="Lee A."/>
            <person name="Lee J.M."/>
            <person name="Lenz C.A."/>
            <person name="Li J.H."/>
            <person name="Li Y.-P."/>
            <person name="Lin X."/>
            <person name="Liu S.X."/>
            <person name="Liu Z.A."/>
            <person name="Luros J.S."/>
            <person name="Maiti R."/>
            <person name="Marziali A."/>
            <person name="Militscher J."/>
            <person name="Miranda M."/>
            <person name="Nguyen M."/>
            <person name="Nierman W.C."/>
            <person name="Osborne B.I."/>
            <person name="Pai G."/>
            <person name="Peterson J."/>
            <person name="Pham P.K."/>
            <person name="Rizzo M."/>
            <person name="Rooney T."/>
            <person name="Rowley D."/>
            <person name="Sakano H."/>
            <person name="Salzberg S.L."/>
            <person name="Schwartz J.R."/>
            <person name="Shinn P."/>
            <person name="Southwick A.M."/>
            <person name="Sun H."/>
            <person name="Tallon L.J."/>
            <person name="Tambunga G."/>
            <person name="Toriumi M.J."/>
            <person name="Town C.D."/>
            <person name="Utterback T."/>
            <person name="Van Aken S."/>
            <person name="Vaysberg M."/>
            <person name="Vysotskaia V.S."/>
            <person name="Walker M."/>
            <person name="Wu D."/>
            <person name="Yu G."/>
            <person name="Fraser C.M."/>
            <person name="Venter J.C."/>
            <person name="Davis R.W."/>
        </authorList>
    </citation>
    <scope>NUCLEOTIDE SEQUENCE [LARGE SCALE GENOMIC DNA]</scope>
    <source>
        <strain>cv. Columbia</strain>
    </source>
</reference>
<reference key="2">
    <citation type="journal article" date="2017" name="Plant J.">
        <title>Araport11: a complete reannotation of the Arabidopsis thaliana reference genome.</title>
        <authorList>
            <person name="Cheng C.Y."/>
            <person name="Krishnakumar V."/>
            <person name="Chan A.P."/>
            <person name="Thibaud-Nissen F."/>
            <person name="Schobel S."/>
            <person name="Town C.D."/>
        </authorList>
    </citation>
    <scope>GENOME REANNOTATION</scope>
    <source>
        <strain>cv. Columbia</strain>
    </source>
</reference>
<reference key="3">
    <citation type="journal article" date="2003" name="Science">
        <title>Empirical analysis of transcriptional activity in the Arabidopsis genome.</title>
        <authorList>
            <person name="Yamada K."/>
            <person name="Lim J."/>
            <person name="Dale J.M."/>
            <person name="Chen H."/>
            <person name="Shinn P."/>
            <person name="Palm C.J."/>
            <person name="Southwick A.M."/>
            <person name="Wu H.C."/>
            <person name="Kim C.J."/>
            <person name="Nguyen M."/>
            <person name="Pham P.K."/>
            <person name="Cheuk R.F."/>
            <person name="Karlin-Newmann G."/>
            <person name="Liu S.X."/>
            <person name="Lam B."/>
            <person name="Sakano H."/>
            <person name="Wu T."/>
            <person name="Yu G."/>
            <person name="Miranda M."/>
            <person name="Quach H.L."/>
            <person name="Tripp M."/>
            <person name="Chang C.H."/>
            <person name="Lee J.M."/>
            <person name="Toriumi M.J."/>
            <person name="Chan M.M."/>
            <person name="Tang C.C."/>
            <person name="Onodera C.S."/>
            <person name="Deng J.M."/>
            <person name="Akiyama K."/>
            <person name="Ansari Y."/>
            <person name="Arakawa T."/>
            <person name="Banh J."/>
            <person name="Banno F."/>
            <person name="Bowser L."/>
            <person name="Brooks S.Y."/>
            <person name="Carninci P."/>
            <person name="Chao Q."/>
            <person name="Choy N."/>
            <person name="Enju A."/>
            <person name="Goldsmith A.D."/>
            <person name="Gurjal M."/>
            <person name="Hansen N.F."/>
            <person name="Hayashizaki Y."/>
            <person name="Johnson-Hopson C."/>
            <person name="Hsuan V.W."/>
            <person name="Iida K."/>
            <person name="Karnes M."/>
            <person name="Khan S."/>
            <person name="Koesema E."/>
            <person name="Ishida J."/>
            <person name="Jiang P.X."/>
            <person name="Jones T."/>
            <person name="Kawai J."/>
            <person name="Kamiya A."/>
            <person name="Meyers C."/>
            <person name="Nakajima M."/>
            <person name="Narusaka M."/>
            <person name="Seki M."/>
            <person name="Sakurai T."/>
            <person name="Satou M."/>
            <person name="Tamse R."/>
            <person name="Vaysberg M."/>
            <person name="Wallender E.K."/>
            <person name="Wong C."/>
            <person name="Yamamura Y."/>
            <person name="Yuan S."/>
            <person name="Shinozaki K."/>
            <person name="Davis R.W."/>
            <person name="Theologis A."/>
            <person name="Ecker J.R."/>
        </authorList>
    </citation>
    <scope>NUCLEOTIDE SEQUENCE [LARGE SCALE MRNA]</scope>
    <source>
        <strain>cv. Columbia</strain>
    </source>
</reference>
<reference key="4">
    <citation type="submission" date="2006-07" db="EMBL/GenBank/DDBJ databases">
        <title>Large-scale analysis of RIKEN Arabidopsis full-length (RAFL) cDNAs.</title>
        <authorList>
            <person name="Totoki Y."/>
            <person name="Seki M."/>
            <person name="Ishida J."/>
            <person name="Nakajima M."/>
            <person name="Enju A."/>
            <person name="Kamiya A."/>
            <person name="Narusaka M."/>
            <person name="Shin-i T."/>
            <person name="Nakagawa M."/>
            <person name="Sakamoto N."/>
            <person name="Oishi K."/>
            <person name="Kohara Y."/>
            <person name="Kobayashi M."/>
            <person name="Toyoda A."/>
            <person name="Sakaki Y."/>
            <person name="Sakurai T."/>
            <person name="Iida K."/>
            <person name="Akiyama K."/>
            <person name="Satou M."/>
            <person name="Toyoda T."/>
            <person name="Konagaya A."/>
            <person name="Carninci P."/>
            <person name="Kawai J."/>
            <person name="Hayashizaki Y."/>
            <person name="Shinozaki K."/>
        </authorList>
    </citation>
    <scope>NUCLEOTIDE SEQUENCE [LARGE SCALE MRNA]</scope>
    <source>
        <strain>cv. Columbia</strain>
    </source>
</reference>
<reference key="5">
    <citation type="journal article" date="1998" name="Science">
        <title>The ubiquitin-related protein RUB1 and auxin response in Arabidopsis.</title>
        <authorList>
            <person name="del Pozo J.C."/>
            <person name="Timpte C."/>
            <person name="Tan S."/>
            <person name="Callis J."/>
            <person name="Estelle M."/>
        </authorList>
    </citation>
    <scope>FUNCTION</scope>
    <scope>INTERACTION WITH AXR1 AND ECR1</scope>
</reference>
<reference key="6">
    <citation type="journal article" date="1999" name="Proc. Natl. Acad. Sci. U.S.A.">
        <title>The Arabidopsis cullin AtCUL1 is modified by the ubiquitin-related protein RUB1.</title>
        <authorList>
            <person name="del Pozo J.C."/>
            <person name="Estelle M."/>
        </authorList>
    </citation>
    <scope>FUNCTION</scope>
</reference>
<reference key="7">
    <citation type="journal article" date="2013" name="Plant Physiol.">
        <title>ML3 is a NEDD8- and ubiquitin-modified protein.</title>
        <authorList>
            <person name="Hakenjos J.P."/>
            <person name="Bejai S."/>
            <person name="Ranftl Q."/>
            <person name="Behringer C."/>
            <person name="Vlot A.C."/>
            <person name="Absmanner B."/>
            <person name="Hammes U."/>
            <person name="Heinzlmeir S."/>
            <person name="Kuster B."/>
            <person name="Schwechheimer C."/>
        </authorList>
    </citation>
    <scope>INTERACTION WITH ML3</scope>
</reference>
<reference key="8">
    <citation type="journal article" date="1998" name="J. Biol. Chem.">
        <title>The rub family of ubiquitin-like proteins. Crystal structure of Arabidopsis rub1 and expression of multiple rubs in Arabidopsis.</title>
        <authorList>
            <person name="Rao-Naik C."/>
            <person name="delaCruz W."/>
            <person name="Laplaza J.M."/>
            <person name="Tan S."/>
            <person name="Callis J."/>
            <person name="Fisher A.J."/>
        </authorList>
    </citation>
    <scope>X-RAY CRYSTALLOGRAPHY (1.7 ANGSTROMS) OF 79-152</scope>
    <scope>TISSUE SPECIFICITY</scope>
</reference>
<name>RUB1_ARATH</name>
<comment type="function">
    <text evidence="1">Ubiquitin exists either covalently attached to another protein, or free (unanchored). When covalently bound, it is conjugated to target proteins via an isopeptide bond either as a monomer (monoubiquitin), a polymer linked via different Lys residues of the ubiquitin (polyubiquitin chains) or a linear polymer linked via the initiator Met of the ubiquitin (linear polyubiquitin chains). Polyubiquitin chains, when attached to a target protein, have different functions depending on the Lys residue of the ubiquitin that is linked: Lys-11-linked is involved in ERAD (endoplasmic reticulum-associated degradation) and in cell-cycle regulation; Lys-29-linked is involved in lysosomal degradation; Lys-33-linked is involved in kinase modification; Lys-48-linked is involved in protein degradation via the proteasome; Lys-63-linked is involved in endocytosis, and DNA-damage responses. Linear polymer chains formed via attachment by the initiator Met lead to cell signaling. Ubiquitin is usually conjugated to Lys residues of target proteins, however, in rare cases, conjugation to Cys or Ser residues has been observed. When polyubiquitin is free (unanchored-polyubiquitin), it also has distinct roles, such as in activation of protein kinases, and in signaling (By similarity).</text>
</comment>
<comment type="function">
    <molecule>NEDD8-like protein RUB1</molecule>
    <text evidence="3 5">Appears to function as a stable post-translational protein modifier. An AMP-RUB1 intermediate is formed by an activating enzyme, distinct from the ubiquitin activating enzyme E1, which is composed of a heterodimer AXR1/ECR1. Auxin response is mediated, at least in part, through modification of the cullin AtCUL1 by the attachment of RUB1 to 'Lys-692'.</text>
</comment>
<comment type="subunit">
    <molecule>NEDD8-like protein RUB1</molecule>
    <text evidence="4 5">Forms a thiol ester with the heterodimer AXR1/ECR1, specifically with the 'Cys-215' of ECR1 (PubMed:9624055). Interacts with ML3 (PubMed:23903439).</text>
</comment>
<comment type="subcellular location">
    <molecule>Ubiquitin</molecule>
    <subcellularLocation>
        <location evidence="1">Cytoplasm</location>
    </subcellularLocation>
    <subcellularLocation>
        <location evidence="1">Nucleus</location>
    </subcellularLocation>
</comment>
<comment type="tissue specificity">
    <text evidence="6">Expressed in leaves, stems and flowers.</text>
</comment>
<comment type="miscellaneous">
    <text>Ubiquitin is encoded by 16 different genes. Ubiquitin is generally synthesized as a polyubiquitin precursor with tandem head to tail repeats. Often, there is one to three additional amino acids after the last repeat, removed in the mature protein. Alternatively, ubiquitin extension protein is synthesized as a single copy of ubiquitin fused to a ribosomal protein (either L40 or S27A) or to a ubiquitin-related protein (either RUB1 or RUB2). Following translation, extension protein is cleaved from ubiquitin.</text>
</comment>
<comment type="similarity">
    <text evidence="7">Belongs to the ubiquitin family.</text>
</comment>
<evidence type="ECO:0000250" key="1"/>
<evidence type="ECO:0000255" key="2">
    <source>
        <dbReference type="PROSITE-ProRule" id="PRU00214"/>
    </source>
</evidence>
<evidence type="ECO:0000269" key="3">
    <source>
    </source>
</evidence>
<evidence type="ECO:0000269" key="4">
    <source>
    </source>
</evidence>
<evidence type="ECO:0000269" key="5">
    <source>
    </source>
</evidence>
<evidence type="ECO:0000269" key="6">
    <source>
    </source>
</evidence>
<evidence type="ECO:0000305" key="7"/>
<evidence type="ECO:0007829" key="8">
    <source>
        <dbReference type="PDB" id="1BT0"/>
    </source>
</evidence>
<dbReference type="EMBL" id="AC007654">
    <property type="protein sequence ID" value="AAF24594.1"/>
    <property type="molecule type" value="Genomic_DNA"/>
</dbReference>
<dbReference type="EMBL" id="CP002684">
    <property type="protein sequence ID" value="AEE31344.1"/>
    <property type="molecule type" value="Genomic_DNA"/>
</dbReference>
<dbReference type="EMBL" id="BT005749">
    <property type="protein sequence ID" value="AAO64156.1"/>
    <property type="molecule type" value="mRNA"/>
</dbReference>
<dbReference type="EMBL" id="BT006110">
    <property type="protein sequence ID" value="AAP04095.1"/>
    <property type="molecule type" value="mRNA"/>
</dbReference>
<dbReference type="EMBL" id="AK228591">
    <property type="protein sequence ID" value="BAF00506.1"/>
    <property type="molecule type" value="mRNA"/>
</dbReference>
<dbReference type="PIR" id="C86439">
    <property type="entry name" value="C86439"/>
</dbReference>
<dbReference type="RefSeq" id="NP_564379.2">
    <property type="nucleotide sequence ID" value="NM_102873.5"/>
</dbReference>
<dbReference type="PDB" id="1BT0">
    <property type="method" value="X-ray"/>
    <property type="resolution" value="1.70 A"/>
    <property type="chains" value="A=77-152"/>
</dbReference>
<dbReference type="PDBsum" id="1BT0"/>
<dbReference type="SMR" id="Q9SHE7"/>
<dbReference type="BioGRID" id="25258">
    <property type="interactions" value="4"/>
</dbReference>
<dbReference type="FunCoup" id="Q9SHE7">
    <property type="interactions" value="210"/>
</dbReference>
<dbReference type="STRING" id="3702.Q9SHE7"/>
<dbReference type="iPTMnet" id="Q9SHE7"/>
<dbReference type="PaxDb" id="3702-AT1G31340.1"/>
<dbReference type="ProteomicsDB" id="226614"/>
<dbReference type="EnsemblPlants" id="AT1G31340.1">
    <property type="protein sequence ID" value="AT1G31340.1"/>
    <property type="gene ID" value="AT1G31340"/>
</dbReference>
<dbReference type="GeneID" id="840023"/>
<dbReference type="Gramene" id="AT1G31340.1">
    <property type="protein sequence ID" value="AT1G31340.1"/>
    <property type="gene ID" value="AT1G31340"/>
</dbReference>
<dbReference type="KEGG" id="ath:AT1G31340"/>
<dbReference type="Araport" id="AT1G31340"/>
<dbReference type="TAIR" id="AT1G31340">
    <property type="gene designation" value="RUB1"/>
</dbReference>
<dbReference type="eggNOG" id="KOG0001">
    <property type="taxonomic scope" value="Eukaryota"/>
</dbReference>
<dbReference type="HOGENOM" id="CLU_010412_0_0_1"/>
<dbReference type="InParanoid" id="Q9SHE7"/>
<dbReference type="OMA" id="MMADYGI"/>
<dbReference type="OrthoDB" id="1076642at2759"/>
<dbReference type="PhylomeDB" id="Q9SHE7"/>
<dbReference type="CD-CODE" id="4299E36E">
    <property type="entry name" value="Nucleolus"/>
</dbReference>
<dbReference type="EvolutionaryTrace" id="Q9SHE7"/>
<dbReference type="PRO" id="PR:Q9SHE7"/>
<dbReference type="Proteomes" id="UP000006548">
    <property type="component" value="Chromosome 1"/>
</dbReference>
<dbReference type="ExpressionAtlas" id="Q9SHE7">
    <property type="expression patterns" value="baseline and differential"/>
</dbReference>
<dbReference type="GO" id="GO:0005829">
    <property type="term" value="C:cytosol"/>
    <property type="evidence" value="ECO:0007005"/>
    <property type="project" value="TAIR"/>
</dbReference>
<dbReference type="GO" id="GO:0005634">
    <property type="term" value="C:nucleus"/>
    <property type="evidence" value="ECO:0007005"/>
    <property type="project" value="TAIR"/>
</dbReference>
<dbReference type="GO" id="GO:0005886">
    <property type="term" value="C:plasma membrane"/>
    <property type="evidence" value="ECO:0007005"/>
    <property type="project" value="TAIR"/>
</dbReference>
<dbReference type="GO" id="GO:0003729">
    <property type="term" value="F:mRNA binding"/>
    <property type="evidence" value="ECO:0000314"/>
    <property type="project" value="TAIR"/>
</dbReference>
<dbReference type="GO" id="GO:0009693">
    <property type="term" value="P:ethylene biosynthetic process"/>
    <property type="evidence" value="ECO:0000315"/>
    <property type="project" value="TAIR"/>
</dbReference>
<dbReference type="GO" id="GO:0045116">
    <property type="term" value="P:protein neddylation"/>
    <property type="evidence" value="ECO:0000304"/>
    <property type="project" value="TAIR"/>
</dbReference>
<dbReference type="GO" id="GO:0009733">
    <property type="term" value="P:response to auxin"/>
    <property type="evidence" value="ECO:0000304"/>
    <property type="project" value="TAIR"/>
</dbReference>
<dbReference type="CDD" id="cd01806">
    <property type="entry name" value="Ubl_NEDD8"/>
    <property type="match status" value="1"/>
</dbReference>
<dbReference type="CDD" id="cd01803">
    <property type="entry name" value="Ubl_ubiquitin"/>
    <property type="match status" value="1"/>
</dbReference>
<dbReference type="FunFam" id="3.10.20.90:FF:000023">
    <property type="entry name" value="NEDD8 protein"/>
    <property type="match status" value="1"/>
</dbReference>
<dbReference type="FunFam" id="3.10.20.90:FF:000016">
    <property type="entry name" value="Polyubiquitin 3"/>
    <property type="match status" value="1"/>
</dbReference>
<dbReference type="Gene3D" id="3.10.20.90">
    <property type="entry name" value="Phosphatidylinositol 3-kinase Catalytic Subunit, Chain A, domain 1"/>
    <property type="match status" value="2"/>
</dbReference>
<dbReference type="InterPro" id="IPR038738">
    <property type="entry name" value="Nedd8-like"/>
</dbReference>
<dbReference type="InterPro" id="IPR000626">
    <property type="entry name" value="Ubiquitin-like_dom"/>
</dbReference>
<dbReference type="InterPro" id="IPR029071">
    <property type="entry name" value="Ubiquitin-like_domsf"/>
</dbReference>
<dbReference type="InterPro" id="IPR019954">
    <property type="entry name" value="Ubiquitin_CS"/>
</dbReference>
<dbReference type="InterPro" id="IPR019956">
    <property type="entry name" value="Ubiquitin_dom"/>
</dbReference>
<dbReference type="InterPro" id="IPR050158">
    <property type="entry name" value="Ubiquitin_ubiquitin-like"/>
</dbReference>
<dbReference type="PANTHER" id="PTHR10666">
    <property type="entry name" value="UBIQUITIN"/>
    <property type="match status" value="1"/>
</dbReference>
<dbReference type="Pfam" id="PF00240">
    <property type="entry name" value="ubiquitin"/>
    <property type="match status" value="2"/>
</dbReference>
<dbReference type="PRINTS" id="PR00348">
    <property type="entry name" value="UBIQUITIN"/>
</dbReference>
<dbReference type="SMART" id="SM00213">
    <property type="entry name" value="UBQ"/>
    <property type="match status" value="2"/>
</dbReference>
<dbReference type="SUPFAM" id="SSF54236">
    <property type="entry name" value="Ubiquitin-like"/>
    <property type="match status" value="2"/>
</dbReference>
<dbReference type="PROSITE" id="PS00299">
    <property type="entry name" value="UBIQUITIN_1"/>
    <property type="match status" value="2"/>
</dbReference>
<dbReference type="PROSITE" id="PS50053">
    <property type="entry name" value="UBIQUITIN_2"/>
    <property type="match status" value="2"/>
</dbReference>
<accession>Q9SHE7</accession>
<accession>O80715</accession>
<accession>P59263</accession>
<accession>Q0WQU3</accession>
<accession>Q38875</accession>
<accession>Q9LDJ2</accession>
<accession>Q9LYW1</accession>
<accession>Q9M0W3</accession>
<accession>Q9M1P9</accession>
<accession>Q9S7X3</accession>
<organism>
    <name type="scientific">Arabidopsis thaliana</name>
    <name type="common">Mouse-ear cress</name>
    <dbReference type="NCBI Taxonomy" id="3702"/>
    <lineage>
        <taxon>Eukaryota</taxon>
        <taxon>Viridiplantae</taxon>
        <taxon>Streptophyta</taxon>
        <taxon>Embryophyta</taxon>
        <taxon>Tracheophyta</taxon>
        <taxon>Spermatophyta</taxon>
        <taxon>Magnoliopsida</taxon>
        <taxon>eudicotyledons</taxon>
        <taxon>Gunneridae</taxon>
        <taxon>Pentapetalae</taxon>
        <taxon>rosids</taxon>
        <taxon>malvids</taxon>
        <taxon>Brassicales</taxon>
        <taxon>Brassicaceae</taxon>
        <taxon>Camelineae</taxon>
        <taxon>Arabidopsis</taxon>
    </lineage>
</organism>